<protein>
    <recommendedName>
        <fullName>Transmembrane protein 247</fullName>
    </recommendedName>
</protein>
<dbReference type="EMBL" id="AAFC03016455">
    <property type="status" value="NOT_ANNOTATED_CDS"/>
    <property type="molecule type" value="Genomic_DNA"/>
</dbReference>
<dbReference type="EMBL" id="BC110240">
    <property type="protein sequence ID" value="AAI10241.1"/>
    <property type="status" value="ALT_INIT"/>
    <property type="molecule type" value="mRNA"/>
</dbReference>
<dbReference type="RefSeq" id="NP_001070537.2">
    <property type="nucleotide sequence ID" value="NM_001077069.1"/>
</dbReference>
<dbReference type="SMR" id="Q2YDG1"/>
<dbReference type="FunCoup" id="Q2YDG1">
    <property type="interactions" value="5"/>
</dbReference>
<dbReference type="STRING" id="9913.ENSBTAP00000005367"/>
<dbReference type="PaxDb" id="9913-ENSBTAP00000005367"/>
<dbReference type="GeneID" id="768009"/>
<dbReference type="KEGG" id="bta:768009"/>
<dbReference type="CTD" id="388946"/>
<dbReference type="eggNOG" id="ENOG502SRZ8">
    <property type="taxonomic scope" value="Eukaryota"/>
</dbReference>
<dbReference type="HOGENOM" id="CLU_112717_0_0_1"/>
<dbReference type="InParanoid" id="Q2YDG1"/>
<dbReference type="OrthoDB" id="9427125at2759"/>
<dbReference type="TreeFam" id="TF337834"/>
<dbReference type="Proteomes" id="UP000009136">
    <property type="component" value="Unplaced"/>
</dbReference>
<dbReference type="GO" id="GO:0005783">
    <property type="term" value="C:endoplasmic reticulum"/>
    <property type="evidence" value="ECO:0000318"/>
    <property type="project" value="GO_Central"/>
</dbReference>
<dbReference type="GO" id="GO:0016020">
    <property type="term" value="C:membrane"/>
    <property type="evidence" value="ECO:0007669"/>
    <property type="project" value="UniProtKB-SubCell"/>
</dbReference>
<dbReference type="InterPro" id="IPR029200">
    <property type="entry name" value="TMEM247"/>
</dbReference>
<dbReference type="PANTHER" id="PTHR36691">
    <property type="entry name" value="TRANSMEMBRANE PROTEIN 247"/>
    <property type="match status" value="1"/>
</dbReference>
<dbReference type="PANTHER" id="PTHR36691:SF1">
    <property type="entry name" value="TRANSMEMBRANE PROTEIN 247"/>
    <property type="match status" value="1"/>
</dbReference>
<dbReference type="Pfam" id="PF15444">
    <property type="entry name" value="TMEM247"/>
    <property type="match status" value="1"/>
</dbReference>
<evidence type="ECO:0000250" key="1">
    <source>
        <dbReference type="UniProtKB" id="A6NEH6"/>
    </source>
</evidence>
<evidence type="ECO:0000255" key="2"/>
<evidence type="ECO:0000256" key="3">
    <source>
        <dbReference type="SAM" id="MobiDB-lite"/>
    </source>
</evidence>
<evidence type="ECO:0000305" key="4"/>
<organism>
    <name type="scientific">Bos taurus</name>
    <name type="common">Bovine</name>
    <dbReference type="NCBI Taxonomy" id="9913"/>
    <lineage>
        <taxon>Eukaryota</taxon>
        <taxon>Metazoa</taxon>
        <taxon>Chordata</taxon>
        <taxon>Craniata</taxon>
        <taxon>Vertebrata</taxon>
        <taxon>Euteleostomi</taxon>
        <taxon>Mammalia</taxon>
        <taxon>Eutheria</taxon>
        <taxon>Laurasiatheria</taxon>
        <taxon>Artiodactyla</taxon>
        <taxon>Ruminantia</taxon>
        <taxon>Pecora</taxon>
        <taxon>Bovidae</taxon>
        <taxon>Bovinae</taxon>
        <taxon>Bos</taxon>
    </lineage>
</organism>
<name>TM247_BOVIN</name>
<gene>
    <name evidence="1" type="primary">TMEM247</name>
</gene>
<sequence length="217" mass="24443">MATEDREMMEGRGAGESCPTFPKMAPDDPMSEGKPRASLPQEADTPKPDSSYDYLEEMETCEDGGCPGPPKVLSSKAGPATTKGQAGDGLELAELPSVPATAAPGSPVRERDAEMELEKVRMEFELKRLKYLHEENERQRQHEEVMEQLQQQATPRLFSGGLQDLLLPQNQFAMFLYCFIFIHIIYVTKEMIFFLFSKHYLFCIAAILLCLIKTLWS</sequence>
<feature type="chain" id="PRO_0000328812" description="Transmembrane protein 247">
    <location>
        <begin position="1"/>
        <end position="217"/>
    </location>
</feature>
<feature type="transmembrane region" description="Helical" evidence="2">
    <location>
        <begin position="165"/>
        <end position="185"/>
    </location>
</feature>
<feature type="transmembrane region" description="Helical" evidence="2">
    <location>
        <begin position="192"/>
        <end position="212"/>
    </location>
</feature>
<feature type="region of interest" description="Disordered" evidence="3">
    <location>
        <begin position="1"/>
        <end position="87"/>
    </location>
</feature>
<feature type="coiled-coil region" evidence="2">
    <location>
        <begin position="109"/>
        <end position="154"/>
    </location>
</feature>
<feature type="compositionally biased region" description="Basic and acidic residues" evidence="3">
    <location>
        <begin position="1"/>
        <end position="10"/>
    </location>
</feature>
<reference key="1">
    <citation type="journal article" date="2009" name="Science">
        <title>The genome sequence of taurine cattle: a window to ruminant biology and evolution.</title>
        <authorList>
            <consortium name="The bovine genome sequencing and analysis consortium"/>
        </authorList>
    </citation>
    <scope>NUCLEOTIDE SEQUENCE [LARGE SCALE GENOMIC DNA]</scope>
    <source>
        <strain>Hereford</strain>
    </source>
</reference>
<reference key="2">
    <citation type="submission" date="2005-11" db="EMBL/GenBank/DDBJ databases">
        <authorList>
            <consortium name="NIH - Mammalian Gene Collection (MGC) project"/>
        </authorList>
    </citation>
    <scope>NUCLEOTIDE SEQUENCE [LARGE SCALE MRNA]</scope>
    <source>
        <strain>Crossbred X Angus</strain>
        <tissue>Liver</tissue>
    </source>
</reference>
<accession>Q2YDG1</accession>
<keyword id="KW-0175">Coiled coil</keyword>
<keyword id="KW-0472">Membrane</keyword>
<keyword id="KW-1185">Reference proteome</keyword>
<keyword id="KW-0812">Transmembrane</keyword>
<keyword id="KW-1133">Transmembrane helix</keyword>
<comment type="subcellular location">
    <subcellularLocation>
        <location evidence="4">Membrane</location>
        <topology evidence="4">Multi-pass membrane protein</topology>
    </subcellularLocation>
</comment>
<comment type="sequence caution" evidence="4">
    <conflict type="erroneous initiation">
        <sequence resource="EMBL-CDS" id="AAI10241"/>
    </conflict>
    <text>Truncated N-terminus.</text>
</comment>
<proteinExistence type="evidence at transcript level"/>